<organism>
    <name type="scientific">Pongo abelii</name>
    <name type="common">Sumatran orangutan</name>
    <name type="synonym">Pongo pygmaeus abelii</name>
    <dbReference type="NCBI Taxonomy" id="9601"/>
    <lineage>
        <taxon>Eukaryota</taxon>
        <taxon>Metazoa</taxon>
        <taxon>Chordata</taxon>
        <taxon>Craniata</taxon>
        <taxon>Vertebrata</taxon>
        <taxon>Euteleostomi</taxon>
        <taxon>Mammalia</taxon>
        <taxon>Eutheria</taxon>
        <taxon>Euarchontoglires</taxon>
        <taxon>Primates</taxon>
        <taxon>Haplorrhini</taxon>
        <taxon>Catarrhini</taxon>
        <taxon>Hominidae</taxon>
        <taxon>Pongo</taxon>
    </lineage>
</organism>
<accession>Q5RAT5</accession>
<evidence type="ECO:0000250" key="1">
    <source>
        <dbReference type="UniProtKB" id="Q3MHD2"/>
    </source>
</evidence>
<evidence type="ECO:0000255" key="2">
    <source>
        <dbReference type="PROSITE-ProRule" id="PRU01345"/>
    </source>
</evidence>
<evidence type="ECO:0000255" key="3">
    <source>
        <dbReference type="PROSITE-ProRule" id="PRU01346"/>
    </source>
</evidence>
<evidence type="ECO:0000305" key="4"/>
<keyword id="KW-0007">Acetylation</keyword>
<keyword id="KW-0963">Cytoplasm</keyword>
<keyword id="KW-0597">Phosphoprotein</keyword>
<keyword id="KW-1185">Reference proteome</keyword>
<name>LSM12_PONAB</name>
<reference key="1">
    <citation type="submission" date="2004-11" db="EMBL/GenBank/DDBJ databases">
        <authorList>
            <consortium name="The German cDNA consortium"/>
        </authorList>
    </citation>
    <scope>NUCLEOTIDE SEQUENCE [LARGE SCALE MRNA]</scope>
    <source>
        <tissue>Kidney</tissue>
    </source>
</reference>
<gene>
    <name type="primary">LSM12</name>
</gene>
<feature type="initiator methionine" description="Removed" evidence="1">
    <location>
        <position position="1"/>
    </location>
</feature>
<feature type="chain" id="PRO_0000305128" description="Protein LSM12">
    <location>
        <begin position="2"/>
        <end position="195"/>
    </location>
</feature>
<feature type="domain" description="Sm" evidence="3">
    <location>
        <begin position="2"/>
        <end position="72"/>
    </location>
</feature>
<feature type="domain" description="AD" evidence="2">
    <location>
        <begin position="80"/>
        <end position="174"/>
    </location>
</feature>
<feature type="region of interest" description="Required for NAADP and TPCN2 binding" evidence="1">
    <location>
        <begin position="4"/>
        <end position="67"/>
    </location>
</feature>
<feature type="modified residue" description="N-acetylalanine" evidence="1">
    <location>
        <position position="2"/>
    </location>
</feature>
<feature type="modified residue" description="Phosphothreonine" evidence="1">
    <location>
        <position position="75"/>
    </location>
</feature>
<proteinExistence type="evidence at transcript level"/>
<comment type="function">
    <text evidence="1">Nicotinic acid adenine dinucleotide phosphate (NAADP) binding protein. Confers NAADP sensitivity to the two pore channel complex (TPCs) by acting as TPC accessory protein necessary for NAADP-evoked Ca(2+) release.</text>
</comment>
<comment type="subunit">
    <text evidence="1">Found in a complex with LSM12, TPCN1 and TPCN2. Interacts with TPCN2.</text>
</comment>
<comment type="subcellular location">
    <subcellularLocation>
        <location evidence="1">Cytoplasm</location>
    </subcellularLocation>
    <text evidence="1">Colocalizes with TPCN2.</text>
</comment>
<comment type="similarity">
    <text evidence="4">Belongs to the LSM12 family.</text>
</comment>
<dbReference type="EMBL" id="CR858927">
    <property type="protein sequence ID" value="CAH91125.1"/>
    <property type="molecule type" value="mRNA"/>
</dbReference>
<dbReference type="RefSeq" id="NP_001125658.1">
    <property type="nucleotide sequence ID" value="NM_001132186.1"/>
</dbReference>
<dbReference type="FunCoup" id="Q5RAT5">
    <property type="interactions" value="1475"/>
</dbReference>
<dbReference type="STRING" id="9601.ENSPPYP00000009381"/>
<dbReference type="Ensembl" id="ENSPPYT00000009758.3">
    <property type="protein sequence ID" value="ENSPPYP00000009381.2"/>
    <property type="gene ID" value="ENSPPYG00000008344.3"/>
</dbReference>
<dbReference type="GeneID" id="100172578"/>
<dbReference type="KEGG" id="pon:100172578"/>
<dbReference type="CTD" id="124801"/>
<dbReference type="eggNOG" id="KOG4401">
    <property type="taxonomic scope" value="Eukaryota"/>
</dbReference>
<dbReference type="GeneTree" id="ENSGT00390000006956"/>
<dbReference type="HOGENOM" id="CLU_073383_3_0_1"/>
<dbReference type="InParanoid" id="Q5RAT5"/>
<dbReference type="OMA" id="FEGELYC"/>
<dbReference type="OrthoDB" id="1057137at2759"/>
<dbReference type="TreeFam" id="TF324296"/>
<dbReference type="Proteomes" id="UP000001595">
    <property type="component" value="Chromosome 17"/>
</dbReference>
<dbReference type="GO" id="GO:0005737">
    <property type="term" value="C:cytoplasm"/>
    <property type="evidence" value="ECO:0000250"/>
    <property type="project" value="UniProtKB"/>
</dbReference>
<dbReference type="GO" id="GO:0003723">
    <property type="term" value="F:RNA binding"/>
    <property type="evidence" value="ECO:0007669"/>
    <property type="project" value="InterPro"/>
</dbReference>
<dbReference type="CDD" id="cd01735">
    <property type="entry name" value="LSm12_N"/>
    <property type="match status" value="1"/>
</dbReference>
<dbReference type="InterPro" id="IPR047574">
    <property type="entry name" value="AD"/>
</dbReference>
<dbReference type="InterPro" id="IPR039683">
    <property type="entry name" value="Lsm12-like"/>
</dbReference>
<dbReference type="InterPro" id="IPR019181">
    <property type="entry name" value="LSM12_ABD"/>
</dbReference>
<dbReference type="InterPro" id="IPR048478">
    <property type="entry name" value="LSM12_LSM"/>
</dbReference>
<dbReference type="InterPro" id="IPR047575">
    <property type="entry name" value="Sm"/>
</dbReference>
<dbReference type="PANTHER" id="PTHR13542">
    <property type="entry name" value="LSM12 HOMOLOG"/>
    <property type="match status" value="1"/>
</dbReference>
<dbReference type="Pfam" id="PF09793">
    <property type="entry name" value="AD"/>
    <property type="match status" value="1"/>
</dbReference>
<dbReference type="Pfam" id="PF21166">
    <property type="entry name" value="LSM12_LSM"/>
    <property type="match status" value="1"/>
</dbReference>
<dbReference type="SMART" id="SM00995">
    <property type="entry name" value="AD"/>
    <property type="match status" value="1"/>
</dbReference>
<dbReference type="PROSITE" id="PS52001">
    <property type="entry name" value="AD"/>
    <property type="match status" value="1"/>
</dbReference>
<dbReference type="PROSITE" id="PS52002">
    <property type="entry name" value="SM"/>
    <property type="match status" value="1"/>
</dbReference>
<sequence length="195" mass="21701">MAAPPGEYFSVGSQVSCRTCQEQRLQGEVVAFDYQSKMLALKCPSSSGKPNHADILLINLQYVSEVEIINDRTETPPPLASLNVSKLASKARTEKEEKLSQAYAISAGVSLEGQQLFQTIHKTIKDCKWQEKNIVVMEEVVITPPYQVENCKGKEGSALSHVRKIVEKHFRDVESQKILQRSQAQQPQKEAALSS</sequence>
<protein>
    <recommendedName>
        <fullName>Protein LSM12</fullName>
    </recommendedName>
</protein>